<keyword id="KW-1003">Cell membrane</keyword>
<keyword id="KW-0297">G-protein coupled receptor</keyword>
<keyword id="KW-0325">Glycoprotein</keyword>
<keyword id="KW-0449">Lipoprotein</keyword>
<keyword id="KW-0472">Membrane</keyword>
<keyword id="KW-0564">Palmitate</keyword>
<keyword id="KW-0675">Receptor</keyword>
<keyword id="KW-0807">Transducer</keyword>
<keyword id="KW-0812">Transmembrane</keyword>
<keyword id="KW-1133">Transmembrane helix</keyword>
<name>MSHR_PONPY</name>
<gene>
    <name type="primary">MC1R</name>
</gene>
<proteinExistence type="inferred from homology"/>
<sequence>MAVQGSQRRLLGSLNSTPTAIPQLGLAANQTGAWCLEVSIPDGLFLSLGLVSLVENVLVVATIAKNRNLHSPMYCFICCLALSDLLVSGGNVLETAVILLLEAGALAARAAVVQQLDNVIDVITCSSMLSSLCFLGAIAVDRYISIFYALRYHSIVTLPRARRAIAAIWVASVLFSTLFIAYYDHAAVLLCLVVFFLAMLVLMAVLYVHMLARACQHAQGIARLHKRQRPVHQGFGLKGAVTLTILLGIFFLCWGPFFLHLTLIVLCPQHPTCSCIFKNFNLFLALIICNAIIDPLIYAFRSQELRRTLKEVLTCSW</sequence>
<evidence type="ECO:0000250" key="1">
    <source>
        <dbReference type="UniProtKB" id="Q01726"/>
    </source>
</evidence>
<evidence type="ECO:0000255" key="2"/>
<evidence type="ECO:0000255" key="3">
    <source>
        <dbReference type="PROSITE-ProRule" id="PRU00521"/>
    </source>
</evidence>
<dbReference type="EMBL" id="AY205087">
    <property type="protein sequence ID" value="AAP30961.1"/>
    <property type="molecule type" value="Genomic_DNA"/>
</dbReference>
<dbReference type="EMBL" id="AB296238">
    <property type="protein sequence ID" value="BAF48470.1"/>
    <property type="molecule type" value="Genomic_DNA"/>
</dbReference>
<dbReference type="SMR" id="Q864L0"/>
<dbReference type="GlyCosmos" id="Q864L0">
    <property type="glycosylation" value="1 site, No reported glycans"/>
</dbReference>
<dbReference type="GO" id="GO:0005886">
    <property type="term" value="C:plasma membrane"/>
    <property type="evidence" value="ECO:0000250"/>
    <property type="project" value="UniProtKB"/>
</dbReference>
<dbReference type="GO" id="GO:0004980">
    <property type="term" value="F:melanocyte-stimulating hormone receptor activity"/>
    <property type="evidence" value="ECO:0007669"/>
    <property type="project" value="InterPro"/>
</dbReference>
<dbReference type="GO" id="GO:0007189">
    <property type="term" value="P:adenylate cyclase-activating G protein-coupled receptor signaling pathway"/>
    <property type="evidence" value="ECO:0007669"/>
    <property type="project" value="UniProtKB-ARBA"/>
</dbReference>
<dbReference type="CDD" id="cd15351">
    <property type="entry name" value="7tmA_MC1R"/>
    <property type="match status" value="1"/>
</dbReference>
<dbReference type="FunFam" id="1.20.1070.10:FF:000211">
    <property type="entry name" value="Melanocyte-stimulating hormone receptor"/>
    <property type="match status" value="1"/>
</dbReference>
<dbReference type="Gene3D" id="1.20.1070.10">
    <property type="entry name" value="Rhodopsin 7-helix transmembrane proteins"/>
    <property type="match status" value="1"/>
</dbReference>
<dbReference type="InterPro" id="IPR000276">
    <property type="entry name" value="GPCR_Rhodpsn"/>
</dbReference>
<dbReference type="InterPro" id="IPR017452">
    <property type="entry name" value="GPCR_Rhodpsn_7TM"/>
</dbReference>
<dbReference type="InterPro" id="IPR001671">
    <property type="entry name" value="Melcrt_ACTH_rcpt"/>
</dbReference>
<dbReference type="InterPro" id="IPR000761">
    <property type="entry name" value="MSH_rcpt"/>
</dbReference>
<dbReference type="PANTHER" id="PTHR22750">
    <property type="entry name" value="G-PROTEIN COUPLED RECEPTOR"/>
    <property type="match status" value="1"/>
</dbReference>
<dbReference type="Pfam" id="PF00001">
    <property type="entry name" value="7tm_1"/>
    <property type="match status" value="2"/>
</dbReference>
<dbReference type="PRINTS" id="PR00237">
    <property type="entry name" value="GPCRRHODOPSN"/>
</dbReference>
<dbReference type="PRINTS" id="PR00534">
    <property type="entry name" value="MCRFAMILY"/>
</dbReference>
<dbReference type="PRINTS" id="PR00536">
    <property type="entry name" value="MELNOCYTESHR"/>
</dbReference>
<dbReference type="SMART" id="SM01381">
    <property type="entry name" value="7TM_GPCR_Srsx"/>
    <property type="match status" value="1"/>
</dbReference>
<dbReference type="SUPFAM" id="SSF81321">
    <property type="entry name" value="Family A G protein-coupled receptor-like"/>
    <property type="match status" value="1"/>
</dbReference>
<dbReference type="PROSITE" id="PS00237">
    <property type="entry name" value="G_PROTEIN_RECEP_F1_1"/>
    <property type="match status" value="1"/>
</dbReference>
<dbReference type="PROSITE" id="PS50262">
    <property type="entry name" value="G_PROTEIN_RECEP_F1_2"/>
    <property type="match status" value="1"/>
</dbReference>
<reference key="1">
    <citation type="journal article" date="2003" name="Am. J. Phys. Anthropol.">
        <title>Evolution of a pigmentation gene, the melanocortin-1 receptor, in primates.</title>
        <authorList>
            <person name="Mundy N.I."/>
            <person name="Kelly J."/>
        </authorList>
    </citation>
    <scope>NUCLEOTIDE SEQUENCE [GENOMIC DNA]</scope>
    <source>
        <strain>Isolate 1</strain>
    </source>
</reference>
<reference key="2">
    <citation type="journal article" date="2008" name="Am. J. Primatol.">
        <title>Variation of the melanocortin 1 receptor gene in the macaques.</title>
        <authorList>
            <person name="Nakayama K."/>
            <person name="Shotake T."/>
            <person name="Takeneka O."/>
            <person name="Ishida T."/>
        </authorList>
    </citation>
    <scope>NUCLEOTIDE SEQUENCE [GENOMIC DNA]</scope>
</reference>
<organism>
    <name type="scientific">Pongo pygmaeus</name>
    <name type="common">Bornean orangutan</name>
    <dbReference type="NCBI Taxonomy" id="9600"/>
    <lineage>
        <taxon>Eukaryota</taxon>
        <taxon>Metazoa</taxon>
        <taxon>Chordata</taxon>
        <taxon>Craniata</taxon>
        <taxon>Vertebrata</taxon>
        <taxon>Euteleostomi</taxon>
        <taxon>Mammalia</taxon>
        <taxon>Eutheria</taxon>
        <taxon>Euarchontoglires</taxon>
        <taxon>Primates</taxon>
        <taxon>Haplorrhini</taxon>
        <taxon>Catarrhini</taxon>
        <taxon>Hominidae</taxon>
        <taxon>Pongo</taxon>
    </lineage>
</organism>
<feature type="chain" id="PRO_0000069841" description="Melanocyte-stimulating hormone receptor">
    <location>
        <begin position="1"/>
        <end position="317"/>
    </location>
</feature>
<feature type="topological domain" description="Extracellular" evidence="2">
    <location>
        <begin position="1"/>
        <end position="37"/>
    </location>
</feature>
<feature type="transmembrane region" description="Helical; Name=1" evidence="2">
    <location>
        <begin position="38"/>
        <end position="63"/>
    </location>
</feature>
<feature type="topological domain" description="Cytoplasmic" evidence="2">
    <location>
        <begin position="64"/>
        <end position="72"/>
    </location>
</feature>
<feature type="transmembrane region" description="Helical; Name=2" evidence="2">
    <location>
        <begin position="73"/>
        <end position="93"/>
    </location>
</feature>
<feature type="topological domain" description="Extracellular" evidence="2">
    <location>
        <begin position="94"/>
        <end position="118"/>
    </location>
</feature>
<feature type="transmembrane region" description="Helical; Name=3" evidence="2">
    <location>
        <begin position="119"/>
        <end position="140"/>
    </location>
</feature>
<feature type="topological domain" description="Cytoplasmic" evidence="2">
    <location>
        <begin position="141"/>
        <end position="163"/>
    </location>
</feature>
<feature type="transmembrane region" description="Helical; Name=4" evidence="2">
    <location>
        <begin position="164"/>
        <end position="183"/>
    </location>
</feature>
<feature type="topological domain" description="Extracellular" evidence="2">
    <location>
        <begin position="184"/>
        <end position="191"/>
    </location>
</feature>
<feature type="transmembrane region" description="Helical; Name=5" evidence="2">
    <location>
        <begin position="192"/>
        <end position="211"/>
    </location>
</feature>
<feature type="topological domain" description="Cytoplasmic" evidence="2">
    <location>
        <begin position="212"/>
        <end position="240"/>
    </location>
</feature>
<feature type="transmembrane region" description="Helical; Name=6" evidence="2">
    <location>
        <begin position="241"/>
        <end position="266"/>
    </location>
</feature>
<feature type="topological domain" description="Extracellular" evidence="2">
    <location>
        <begin position="267"/>
        <end position="279"/>
    </location>
</feature>
<feature type="transmembrane region" description="Helical; Name=7" evidence="2">
    <location>
        <begin position="280"/>
        <end position="300"/>
    </location>
</feature>
<feature type="topological domain" description="Cytoplasmic" evidence="2">
    <location>
        <begin position="301"/>
        <end position="317"/>
    </location>
</feature>
<feature type="lipid moiety-binding region" description="S-palmitoyl cysteine" evidence="2">
    <location>
        <position position="315"/>
    </location>
</feature>
<feature type="glycosylation site" description="N-linked (GlcNAc...) asparagine" evidence="2">
    <location>
        <position position="29"/>
    </location>
</feature>
<comment type="function">
    <text evidence="1">Receptor for MSH (alpha, beta and gamma) and ACTH. The activity of this receptor is mediated by G proteins which activate adenylate cyclase. Mediates melanogenesis, the production of eumelanin (black/brown) and phaeomelanin (red/yellow), via regulation of cAMP signaling in melanocytes.</text>
</comment>
<comment type="subunit">
    <text evidence="1">Interacts with MGRN1, but does not undergo MGRN1-mediated ubiquitination; this interaction competes with GNAS-binding and thus inhibits agonist-induced cAMP production. Interacts with OPN3; the interaction results in a decrease in MC1R-mediated cAMP signaling and ultimately a decrease in melanin production in melanocytes.</text>
</comment>
<comment type="subcellular location">
    <subcellularLocation>
        <location evidence="1">Cell membrane</location>
        <topology evidence="2">Multi-pass membrane protein</topology>
    </subcellularLocation>
</comment>
<comment type="similarity">
    <text evidence="3">Belongs to the G-protein coupled receptor 1 family.</text>
</comment>
<accession>Q864L0</accession>
<accession>A3KFA7</accession>
<protein>
    <recommendedName>
        <fullName>Melanocyte-stimulating hormone receptor</fullName>
        <shortName>MSH-R</shortName>
    </recommendedName>
    <alternativeName>
        <fullName>Melanocortin receptor 1</fullName>
        <shortName>MC1-R</shortName>
    </alternativeName>
</protein>